<evidence type="ECO:0000255" key="1"/>
<evidence type="ECO:0000255" key="2">
    <source>
        <dbReference type="PROSITE-ProRule" id="PRU01387"/>
    </source>
</evidence>
<evidence type="ECO:0000269" key="3">
    <source>
    </source>
</evidence>
<evidence type="ECO:0000269" key="4">
    <source ref="6"/>
</evidence>
<evidence type="ECO:0000269" key="5">
    <source ref="7"/>
</evidence>
<evidence type="ECO:0000303" key="6">
    <source>
    </source>
</evidence>
<evidence type="ECO:0000303" key="7">
    <source>
    </source>
</evidence>
<evidence type="ECO:0000303" key="8">
    <source>
    </source>
</evidence>
<evidence type="ECO:0000305" key="9"/>
<evidence type="ECO:0000312" key="10">
    <source>
        <dbReference type="PDB" id="4MXW"/>
    </source>
</evidence>
<proteinExistence type="evidence at protein level"/>
<organism>
    <name type="scientific">Homo sapiens</name>
    <name type="common">Human</name>
    <dbReference type="NCBI Taxonomy" id="9606"/>
    <lineage>
        <taxon>Eukaryota</taxon>
        <taxon>Metazoa</taxon>
        <taxon>Chordata</taxon>
        <taxon>Craniata</taxon>
        <taxon>Vertebrata</taxon>
        <taxon>Euteleostomi</taxon>
        <taxon>Mammalia</taxon>
        <taxon>Eutheria</taxon>
        <taxon>Euarchontoglires</taxon>
        <taxon>Primates</taxon>
        <taxon>Haplorrhini</taxon>
        <taxon>Catarrhini</taxon>
        <taxon>Hominidae</taxon>
        <taxon>Homo</taxon>
    </lineage>
</organism>
<accession>Q06643</accession>
<accession>P78370</accession>
<accession>Q52LU8</accession>
<accession>Q99761</accession>
<keyword id="KW-0002">3D-structure</keyword>
<keyword id="KW-0025">Alternative splicing</keyword>
<keyword id="KW-0202">Cytokine</keyword>
<keyword id="KW-0903">Direct protein sequencing</keyword>
<keyword id="KW-0325">Glycoprotein</keyword>
<keyword id="KW-0472">Membrane</keyword>
<keyword id="KW-1267">Proteomics identification</keyword>
<keyword id="KW-1185">Reference proteome</keyword>
<keyword id="KW-0735">Signal-anchor</keyword>
<keyword id="KW-0812">Transmembrane</keyword>
<keyword id="KW-1133">Transmembrane helix</keyword>
<name>TNFC_HUMAN</name>
<protein>
    <recommendedName>
        <fullName>Lymphotoxin-beta</fullName>
        <shortName>LT-beta</shortName>
    </recommendedName>
    <alternativeName>
        <fullName>Tumor necrosis factor C</fullName>
        <shortName>TNF-C</shortName>
    </alternativeName>
    <alternativeName>
        <fullName>Tumor necrosis factor ligand superfamily member 3</fullName>
    </alternativeName>
</protein>
<feature type="chain" id="PRO_0000185486" description="Lymphotoxin-beta">
    <location>
        <begin position="1"/>
        <end position="244"/>
    </location>
</feature>
<feature type="topological domain" description="Cytoplasmic" evidence="1">
    <location>
        <begin position="1"/>
        <end position="18"/>
    </location>
</feature>
<feature type="transmembrane region" description="Helical; Signal-anchor for type II membrane protein" evidence="1">
    <location>
        <begin position="19"/>
        <end position="48"/>
    </location>
</feature>
<feature type="topological domain" description="Extracellular" evidence="1">
    <location>
        <begin position="49"/>
        <end position="244"/>
    </location>
</feature>
<feature type="domain" description="THD" evidence="2">
    <location>
        <begin position="88"/>
        <end position="243"/>
    </location>
</feature>
<feature type="glycosylation site" description="N-linked (GlcNAc...) asparagine" evidence="1">
    <location>
        <position position="222"/>
    </location>
</feature>
<feature type="splice variant" id="VSP_006441" description="In isoform 2." evidence="6 7 8">
    <original>GLVTETADPGAQAQQGLGFQKLPEE</original>
    <variation>GLGFRSCQRRSQKQISAPGSQLPTS</variation>
    <location>
        <begin position="53"/>
        <end position="77"/>
    </location>
</feature>
<feature type="splice variant" id="VSP_006442" description="In isoform 2." evidence="6 7 8">
    <location>
        <begin position="78"/>
        <end position="244"/>
    </location>
</feature>
<feature type="sequence variant" id="VAR_013025" description="In dbSNP:rs3093554." evidence="4">
    <original>G</original>
    <variation>E</variation>
    <location>
        <position position="70"/>
    </location>
</feature>
<feature type="sequence variant" id="VAR_016331" description="In dbSNP:rs4647186." evidence="5">
    <original>S</original>
    <variation>R</variation>
    <location>
        <position position="84"/>
    </location>
</feature>
<feature type="sequence variant" id="VAR_016332" description="In dbSNP:rs4647187." evidence="5">
    <original>L</original>
    <variation>F</variation>
    <location>
        <position position="87"/>
    </location>
</feature>
<feature type="sequence variant" id="VAR_013026" description="In dbSNP:rs3093555." evidence="4">
    <original>A</original>
    <variation>P</variation>
    <location>
        <position position="111"/>
    </location>
</feature>
<feature type="sequence variant" id="VAR_029145" description="In dbSNP:rs2229699.">
    <original>A</original>
    <variation>D</variation>
    <location>
        <position position="122"/>
    </location>
</feature>
<feature type="mutagenesis site" description="In subunit 1; reduces binding of LTA(1)-LTB(2) to LTBR and abolishes LTBR-mediated NF-kappa-B signaling activation; when associated with R-109 and E-142, and 'A-142' in LTA. In subunit 2; reduces binding of LTA(1)-LTB(2) to LTBR and abolishes LTBR-mediated NF-kappa-B signaling activation; when associated with R-109 and E-142, and with 'A-170' in LTB (subunit 1). In subunit 1; abolishes binding of LTA(1)-LTB(2) to LTBR and abolishes LTBR-mediated NF-kappa-B signaling activation; when associated with R-109; E-142 and A-170, and with 'E-108'; 'R-109' and 'E-142' in LTB (subunit 2), and with 'A-142' in LTA." evidence="3">
    <original>K</original>
    <variation>E</variation>
    <location>
        <position position="108"/>
    </location>
</feature>
<feature type="mutagenesis site" description="In subunit 1; reduces binding of LTA(1)-LTB(2) to LTBR and abolishes LTBR-mediated NF-kappa-B signaling activation; when associated with E-108 and E-142, and 'A-142' in LTA. In subunit 2; reduces binding of LTA(1)-LTB(2) to LTBR and abolishes LTBR-mediated NF-kappa-B signaling activation; when associated with E-108 and E-142, and with 'A-170' in LTB (subunit 1). In subunit 1; abolishes binding of LTA(1)-LTB(2) to LTBR and abolishes LTBR-mediated NF-kappa-B signaling activation; when associated with E-108; E-142 and A-170, and with 'E-108'; 'R-109' and 'E-142' in LTB (subunit 2), and with 'A-142' in LTA." evidence="3">
    <original>E</original>
    <variation>R</variation>
    <location>
        <position position="109"/>
    </location>
</feature>
<feature type="mutagenesis site" description="In subunit 1; reduces binding of LTA(1)-LTB(2) to LTBR and abolishes LTBR-mediated NF-kappa-B signaling activation; when associated with E-108 and R-109, and 'A-142' in LTA. In subunit 2; reduces binding of LTA(1)-LTB(2) to LTBR and abolishes LTBR-mediated NF-kappa-B signaling activation; when associated with E-108 and R-109, and with 'A-170' in LTB (subunit 1). In subunit 1; abolishes binding of LTA(1)-LTB(2) to LTBR and abolishes LTBR-mediated NF-kappa-B signaling activation; when associated with E-108; R-109 and A-170, and with 'E-108'; 'R-109' and 'E-142' in LTB (subunit 2), and with 'A-142' in LTA." evidence="3">
    <original>R</original>
    <variation>E</variation>
    <location>
        <position position="142"/>
    </location>
</feature>
<feature type="mutagenesis site" description="In subunit 2; no significant effect on binding of LTA(1)-LTB(2) to LTBR and LTBR-mediated NF-kappa-B signaling activation. In subunit 1; reduces binding of LTA(1)-LTB(2) to LTBR and abolishes LTBR-mediated NF-kappa-B signaling activation; when associated with 'E-108', 'R-109' and 'E-142' in LTB (subunit 2). In subunit 1, abolishes binding of LTA(1)-LTB(2) to LTBR and abolishes LTBR-mediated NF-kappa-B signaling activation; when associated with E-108; R-109 and E-142, and with 'E-108'; 'R-109' and 'E-142' in LTB (subunit 2), and with 'A-142' in LTA." evidence="3">
    <original>Y</original>
    <variation>A</variation>
    <location>
        <position position="170"/>
    </location>
</feature>
<feature type="sequence conflict" description="In Ref. 2; AAB37342." evidence="9" ref="2">
    <original>DPGAQAQQGL</original>
    <variation>GLSAPGSGRT</variation>
    <location>
        <begin position="60"/>
        <end position="69"/>
    </location>
</feature>
<sequence>MGALGLEGRGGRLQGRGSLLLAVAGATSLVTLLLAVPITVLAVLALVPQDQGGLVTETADPGAQAQQGLGFQKLPEEEPETDLSPGLPAAHLIGAPLKGQGLGWETTKEQAFLTSGTQFSDAEGLALPQDGLYYLYCLVGYRGRAPPGGGDPQGRSVTLRSSLYRAGGAYGPGTPELLLEGAETVTPVLDPARRQGYGPLWYTSVGFGGLVQLRRGERVYVNISHPDMVDFARGKTFFGAVMVG</sequence>
<gene>
    <name type="primary">LTB</name>
    <name type="synonym">TNFC</name>
    <name type="synonym">TNFSF3</name>
</gene>
<comment type="function">
    <text evidence="3">Cytokine that binds to LTBR/TNFRSF3 (PubMed:24248355). May play a specific role in immune response regulation. Provides the membrane anchor for the attachment of the heterotrimeric complex to the cell surface. Isoform 2 is probably non-functional.</text>
</comment>
<comment type="subunit">
    <text evidence="3">Heterotrimer of either two LTB and one LTA subunits or (less prevalent) one LTB and two LTA subunits.</text>
</comment>
<comment type="subcellular location">
    <subcellularLocation>
        <location evidence="9">Membrane</location>
        <topology evidence="9">Single-pass type II membrane protein</topology>
    </subcellularLocation>
</comment>
<comment type="alternative products">
    <event type="alternative splicing"/>
    <isoform>
        <id>Q06643-1</id>
        <name>1</name>
        <sequence type="displayed"/>
    </isoform>
    <isoform>
        <id>Q06643-2</id>
        <name>2</name>
        <sequence type="described" ref="VSP_006441 VSP_006442"/>
    </isoform>
</comment>
<comment type="tissue specificity">
    <text>Spleen and thymus.</text>
</comment>
<comment type="similarity">
    <text evidence="9">Belongs to the tumor necrosis factor family.</text>
</comment>
<reference key="1">
    <citation type="journal article" date="1993" name="Cell">
        <title>Lymphotoxin beta, a novel member of the TNF family that forms a heteromeric complex with lymphotoxin on the cell surface.</title>
        <authorList>
            <person name="Browning J.L."/>
            <person name="Ngam-Ek A."/>
            <person name="Lawton P."/>
            <person name="Demarinis J."/>
            <person name="Tizard R."/>
            <person name="Chow E.P."/>
            <person name="Hession C."/>
            <person name="O'Brine-Greco B."/>
            <person name="Foley S.F."/>
            <person name="Ware C.F."/>
        </authorList>
    </citation>
    <scope>NUCLEOTIDE SEQUENCE (ISOFORM 1)</scope>
    <scope>PARTIAL PROTEIN SEQUENCE</scope>
    <source>
        <tissue>T-cell</tissue>
    </source>
</reference>
<reference key="2">
    <citation type="journal article" date="1997" name="Biochem. Biophys. Res. Commun.">
        <title>Identification of two lymphotoxin beta isoforms expressed in human lymphoid cell lines and non-Hodgkin's lymphomas.</title>
        <authorList>
            <person name="Warzocha K."/>
            <person name="Renard N."/>
            <person name="Charlot C."/>
            <person name="Bienvenu J."/>
            <person name="Coiffier B."/>
            <person name="Salles G."/>
        </authorList>
    </citation>
    <scope>NUCLEOTIDE SEQUENCE [MRNA] (ISOFORMS 1 AND 2)</scope>
</reference>
<reference key="3">
    <citation type="journal article" date="1999" name="J. Immunol.">
        <title>A new member of the Ig superfamily and a V-ATPase G subunit are among the predicted products of novel genes close to the TNF locus in the human MHC.</title>
        <authorList>
            <person name="Neville M.J."/>
            <person name="Campbell R.D."/>
        </authorList>
    </citation>
    <scope>NUCLEOTIDE SEQUENCE (ISOFORM 1)</scope>
</reference>
<reference key="4">
    <citation type="journal article" date="2003" name="Genome Res.">
        <title>Analysis of the gene-dense major histocompatibility complex class III region and its comparison to mouse.</title>
        <authorList>
            <person name="Xie T."/>
            <person name="Rowen L."/>
            <person name="Aguado B."/>
            <person name="Ahearn M.E."/>
            <person name="Madan A."/>
            <person name="Qin S."/>
            <person name="Campbell R.D."/>
            <person name="Hood L."/>
        </authorList>
    </citation>
    <scope>NUCLEOTIDE SEQUENCE [LARGE SCALE GENOMIC DNA]</scope>
</reference>
<reference key="5">
    <citation type="submission" date="1999-09" db="EMBL/GenBank/DDBJ databases">
        <title>Homo sapiens 2,229,817bp genomic DNA of 6p21.3 HLA class I region.</title>
        <authorList>
            <person name="Shiina S."/>
            <person name="Tamiya G."/>
            <person name="Oka A."/>
            <person name="Inoko H."/>
        </authorList>
    </citation>
    <scope>NUCLEOTIDE SEQUENCE [LARGE SCALE GENOMIC DNA]</scope>
</reference>
<reference key="6">
    <citation type="submission" date="2001-12" db="EMBL/GenBank/DDBJ databases">
        <authorList>
            <consortium name="SeattleSNPs variation discovery resource"/>
        </authorList>
    </citation>
    <scope>NUCLEOTIDE SEQUENCE [GENOMIC DNA]</scope>
    <scope>VARIANTS GLU-70 AND PRO-111</scope>
</reference>
<reference key="7">
    <citation type="submission" date="2003-01" db="EMBL/GenBank/DDBJ databases">
        <authorList>
            <consortium name="NIEHS SNPs program"/>
        </authorList>
    </citation>
    <scope>NUCLEOTIDE SEQUENCE [GENOMIC DNA]</scope>
    <scope>VARIANTS ARG-84 AND PHE-87</scope>
</reference>
<reference key="8">
    <citation type="journal article" date="2004" name="Nat. Genet.">
        <title>Complete sequencing and characterization of 21,243 full-length human cDNAs.</title>
        <authorList>
            <person name="Ota T."/>
            <person name="Suzuki Y."/>
            <person name="Nishikawa T."/>
            <person name="Otsuki T."/>
            <person name="Sugiyama T."/>
            <person name="Irie R."/>
            <person name="Wakamatsu A."/>
            <person name="Hayashi K."/>
            <person name="Sato H."/>
            <person name="Nagai K."/>
            <person name="Kimura K."/>
            <person name="Makita H."/>
            <person name="Sekine M."/>
            <person name="Obayashi M."/>
            <person name="Nishi T."/>
            <person name="Shibahara T."/>
            <person name="Tanaka T."/>
            <person name="Ishii S."/>
            <person name="Yamamoto J."/>
            <person name="Saito K."/>
            <person name="Kawai Y."/>
            <person name="Isono Y."/>
            <person name="Nakamura Y."/>
            <person name="Nagahari K."/>
            <person name="Murakami K."/>
            <person name="Yasuda T."/>
            <person name="Iwayanagi T."/>
            <person name="Wagatsuma M."/>
            <person name="Shiratori A."/>
            <person name="Sudo H."/>
            <person name="Hosoiri T."/>
            <person name="Kaku Y."/>
            <person name="Kodaira H."/>
            <person name="Kondo H."/>
            <person name="Sugawara M."/>
            <person name="Takahashi M."/>
            <person name="Kanda K."/>
            <person name="Yokoi T."/>
            <person name="Furuya T."/>
            <person name="Kikkawa E."/>
            <person name="Omura Y."/>
            <person name="Abe K."/>
            <person name="Kamihara K."/>
            <person name="Katsuta N."/>
            <person name="Sato K."/>
            <person name="Tanikawa M."/>
            <person name="Yamazaki M."/>
            <person name="Ninomiya K."/>
            <person name="Ishibashi T."/>
            <person name="Yamashita H."/>
            <person name="Murakawa K."/>
            <person name="Fujimori K."/>
            <person name="Tanai H."/>
            <person name="Kimata M."/>
            <person name="Watanabe M."/>
            <person name="Hiraoka S."/>
            <person name="Chiba Y."/>
            <person name="Ishida S."/>
            <person name="Ono Y."/>
            <person name="Takiguchi S."/>
            <person name="Watanabe S."/>
            <person name="Yosida M."/>
            <person name="Hotuta T."/>
            <person name="Kusano J."/>
            <person name="Kanehori K."/>
            <person name="Takahashi-Fujii A."/>
            <person name="Hara H."/>
            <person name="Tanase T.-O."/>
            <person name="Nomura Y."/>
            <person name="Togiya S."/>
            <person name="Komai F."/>
            <person name="Hara R."/>
            <person name="Takeuchi K."/>
            <person name="Arita M."/>
            <person name="Imose N."/>
            <person name="Musashino K."/>
            <person name="Yuuki H."/>
            <person name="Oshima A."/>
            <person name="Sasaki N."/>
            <person name="Aotsuka S."/>
            <person name="Yoshikawa Y."/>
            <person name="Matsunawa H."/>
            <person name="Ichihara T."/>
            <person name="Shiohata N."/>
            <person name="Sano S."/>
            <person name="Moriya S."/>
            <person name="Momiyama H."/>
            <person name="Satoh N."/>
            <person name="Takami S."/>
            <person name="Terashima Y."/>
            <person name="Suzuki O."/>
            <person name="Nakagawa S."/>
            <person name="Senoh A."/>
            <person name="Mizoguchi H."/>
            <person name="Goto Y."/>
            <person name="Shimizu F."/>
            <person name="Wakebe H."/>
            <person name="Hishigaki H."/>
            <person name="Watanabe T."/>
            <person name="Sugiyama A."/>
            <person name="Takemoto M."/>
            <person name="Kawakami B."/>
            <person name="Yamazaki M."/>
            <person name="Watanabe K."/>
            <person name="Kumagai A."/>
            <person name="Itakura S."/>
            <person name="Fukuzumi Y."/>
            <person name="Fujimori Y."/>
            <person name="Komiyama M."/>
            <person name="Tashiro H."/>
            <person name="Tanigami A."/>
            <person name="Fujiwara T."/>
            <person name="Ono T."/>
            <person name="Yamada K."/>
            <person name="Fujii Y."/>
            <person name="Ozaki K."/>
            <person name="Hirao M."/>
            <person name="Ohmori Y."/>
            <person name="Kawabata A."/>
            <person name="Hikiji T."/>
            <person name="Kobatake N."/>
            <person name="Inagaki H."/>
            <person name="Ikema Y."/>
            <person name="Okamoto S."/>
            <person name="Okitani R."/>
            <person name="Kawakami T."/>
            <person name="Noguchi S."/>
            <person name="Itoh T."/>
            <person name="Shigeta K."/>
            <person name="Senba T."/>
            <person name="Matsumura K."/>
            <person name="Nakajima Y."/>
            <person name="Mizuno T."/>
            <person name="Morinaga M."/>
            <person name="Sasaki M."/>
            <person name="Togashi T."/>
            <person name="Oyama M."/>
            <person name="Hata H."/>
            <person name="Watanabe M."/>
            <person name="Komatsu T."/>
            <person name="Mizushima-Sugano J."/>
            <person name="Satoh T."/>
            <person name="Shirai Y."/>
            <person name="Takahashi Y."/>
            <person name="Nakagawa K."/>
            <person name="Okumura K."/>
            <person name="Nagase T."/>
            <person name="Nomura N."/>
            <person name="Kikuchi H."/>
            <person name="Masuho Y."/>
            <person name="Yamashita R."/>
            <person name="Nakai K."/>
            <person name="Yada T."/>
            <person name="Nakamura Y."/>
            <person name="Ohara O."/>
            <person name="Isogai T."/>
            <person name="Sugano S."/>
        </authorList>
    </citation>
    <scope>NUCLEOTIDE SEQUENCE [LARGE SCALE MRNA] (ISOFORM 2)</scope>
    <source>
        <tissue>Spleen</tissue>
    </source>
</reference>
<reference key="9">
    <citation type="submission" date="2005-07" db="EMBL/GenBank/DDBJ databases">
        <authorList>
            <person name="Mural R.J."/>
            <person name="Istrail S."/>
            <person name="Sutton G."/>
            <person name="Florea L."/>
            <person name="Halpern A.L."/>
            <person name="Mobarry C.M."/>
            <person name="Lippert R."/>
            <person name="Walenz B."/>
            <person name="Shatkay H."/>
            <person name="Dew I."/>
            <person name="Miller J.R."/>
            <person name="Flanigan M.J."/>
            <person name="Edwards N.J."/>
            <person name="Bolanos R."/>
            <person name="Fasulo D."/>
            <person name="Halldorsson B.V."/>
            <person name="Hannenhalli S."/>
            <person name="Turner R."/>
            <person name="Yooseph S."/>
            <person name="Lu F."/>
            <person name="Nusskern D.R."/>
            <person name="Shue B.C."/>
            <person name="Zheng X.H."/>
            <person name="Zhong F."/>
            <person name="Delcher A.L."/>
            <person name="Huson D.H."/>
            <person name="Kravitz S.A."/>
            <person name="Mouchard L."/>
            <person name="Reinert K."/>
            <person name="Remington K.A."/>
            <person name="Clark A.G."/>
            <person name="Waterman M.S."/>
            <person name="Eichler E.E."/>
            <person name="Adams M.D."/>
            <person name="Hunkapiller M.W."/>
            <person name="Myers E.W."/>
            <person name="Venter J.C."/>
        </authorList>
    </citation>
    <scope>NUCLEOTIDE SEQUENCE [LARGE SCALE GENOMIC DNA]</scope>
</reference>
<reference key="10">
    <citation type="journal article" date="2004" name="Genome Res.">
        <title>The status, quality, and expansion of the NIH full-length cDNA project: the Mammalian Gene Collection (MGC).</title>
        <authorList>
            <consortium name="The MGC Project Team"/>
        </authorList>
    </citation>
    <scope>NUCLEOTIDE SEQUENCE [LARGE SCALE MRNA] (ISOFORMS 1 AND 2)</scope>
    <source>
        <tissue>Colon</tissue>
    </source>
</reference>
<reference evidence="10" key="11">
    <citation type="journal article" date="2013" name="Proc. Natl. Acad. Sci. U.S.A.">
        <title>Dimerization of LTbetaR by LTalpha1beta2 is necessary and sufficient for signal transduction.</title>
        <authorList>
            <person name="Sudhamsu J."/>
            <person name="Yin J."/>
            <person name="Chiang E.Y."/>
            <person name="Starovasnik M.A."/>
            <person name="Grogan J.L."/>
            <person name="Hymowitz S.G."/>
        </authorList>
    </citation>
    <scope>STRUCTURE BY ELECTRON MICROSCOPY (3.60 ANGSTROMS) OF 86-244 IN COMPLEX WITH LTA; LTBR AND ANTI-LTA FAB</scope>
    <scope>FUNCTION</scope>
    <scope>SUBUNIT</scope>
    <scope>MUTAGENESIS OF LYS-108; GLU-109; ARG-142 AND TYR-170</scope>
</reference>
<dbReference type="EMBL" id="L11016">
    <property type="protein sequence ID" value="AAA99888.1"/>
    <property type="molecule type" value="Genomic_DNA"/>
</dbReference>
<dbReference type="EMBL" id="U89922">
    <property type="protein sequence ID" value="AAC51769.1"/>
    <property type="molecule type" value="mRNA"/>
</dbReference>
<dbReference type="EMBL" id="U79029">
    <property type="protein sequence ID" value="AAB37342.1"/>
    <property type="molecule type" value="mRNA"/>
</dbReference>
<dbReference type="EMBL" id="L11015">
    <property type="protein sequence ID" value="AAA36191.1"/>
    <property type="molecule type" value="mRNA"/>
</dbReference>
<dbReference type="EMBL" id="Y14768">
    <property type="protein sequence ID" value="CAA75069.1"/>
    <property type="molecule type" value="Genomic_DNA"/>
</dbReference>
<dbReference type="EMBL" id="AF129756">
    <property type="protein sequence ID" value="AAD18089.1"/>
    <property type="molecule type" value="Genomic_DNA"/>
</dbReference>
<dbReference type="EMBL" id="BA000025">
    <property type="protein sequence ID" value="BAB63395.1"/>
    <property type="molecule type" value="Genomic_DNA"/>
</dbReference>
<dbReference type="EMBL" id="AY070219">
    <property type="protein sequence ID" value="AAL49954.1"/>
    <property type="molecule type" value="Genomic_DNA"/>
</dbReference>
<dbReference type="EMBL" id="AY070219">
    <property type="protein sequence ID" value="AAL49955.1"/>
    <property type="molecule type" value="Genomic_DNA"/>
</dbReference>
<dbReference type="EMBL" id="AY216497">
    <property type="protein sequence ID" value="AAO21134.1"/>
    <property type="molecule type" value="Genomic_DNA"/>
</dbReference>
<dbReference type="EMBL" id="AK312210">
    <property type="protein sequence ID" value="BAG35143.1"/>
    <property type="molecule type" value="mRNA"/>
</dbReference>
<dbReference type="EMBL" id="CH471081">
    <property type="protein sequence ID" value="EAX03425.1"/>
    <property type="molecule type" value="Genomic_DNA"/>
</dbReference>
<dbReference type="EMBL" id="BC069330">
    <property type="protein sequence ID" value="AAH69330.1"/>
    <property type="molecule type" value="mRNA"/>
</dbReference>
<dbReference type="EMBL" id="BC093783">
    <property type="protein sequence ID" value="AAH93783.1"/>
    <property type="molecule type" value="mRNA"/>
</dbReference>
<dbReference type="CCDS" id="CCDS4703.1">
    <molecule id="Q06643-1"/>
</dbReference>
<dbReference type="CCDS" id="CCDS4704.1">
    <molecule id="Q06643-2"/>
</dbReference>
<dbReference type="PIR" id="A46066">
    <property type="entry name" value="A46066"/>
</dbReference>
<dbReference type="PIR" id="JC5645">
    <property type="entry name" value="JC5645"/>
</dbReference>
<dbReference type="RefSeq" id="NP_002332.1">
    <molecule id="Q06643-1"/>
    <property type="nucleotide sequence ID" value="NM_002341.2"/>
</dbReference>
<dbReference type="RefSeq" id="NP_033666.1">
    <molecule id="Q06643-2"/>
    <property type="nucleotide sequence ID" value="NM_009588.1"/>
</dbReference>
<dbReference type="PDB" id="4MXW">
    <property type="method" value="X-ray"/>
    <property type="resolution" value="3.60 A"/>
    <property type="chains" value="B/D/Y/Z=86-244"/>
</dbReference>
<dbReference type="PDBsum" id="4MXW"/>
<dbReference type="SMR" id="Q06643"/>
<dbReference type="BioGRID" id="110228">
    <property type="interactions" value="2"/>
</dbReference>
<dbReference type="ComplexPortal" id="CPX-8947">
    <property type="entry name" value="Lymphotoxin-alpha-beta-LTBR receptor complex"/>
</dbReference>
<dbReference type="CORUM" id="Q06643"/>
<dbReference type="DIP" id="DIP-2996N"/>
<dbReference type="FunCoup" id="Q06643">
    <property type="interactions" value="372"/>
</dbReference>
<dbReference type="IntAct" id="Q06643">
    <property type="interactions" value="6"/>
</dbReference>
<dbReference type="STRING" id="9606.ENSP00000410481"/>
<dbReference type="BindingDB" id="Q06643"/>
<dbReference type="ChEMBL" id="CHEMBL3713022"/>
<dbReference type="GlyCosmos" id="Q06643">
    <property type="glycosylation" value="1 site, No reported glycans"/>
</dbReference>
<dbReference type="GlyGen" id="Q06643">
    <property type="glycosylation" value="1 site"/>
</dbReference>
<dbReference type="iPTMnet" id="Q06643"/>
<dbReference type="PhosphoSitePlus" id="Q06643"/>
<dbReference type="BioMuta" id="LTB"/>
<dbReference type="DMDM" id="549088"/>
<dbReference type="MassIVE" id="Q06643"/>
<dbReference type="PaxDb" id="9606-ENSP00000410481"/>
<dbReference type="PeptideAtlas" id="Q06643"/>
<dbReference type="ProteomicsDB" id="58468">
    <molecule id="Q06643-1"/>
</dbReference>
<dbReference type="ProteomicsDB" id="58469">
    <molecule id="Q06643-2"/>
</dbReference>
<dbReference type="ABCD" id="Q06643">
    <property type="antibodies" value="8 sequenced antibodies"/>
</dbReference>
<dbReference type="Antibodypedia" id="27204">
    <property type="antibodies" value="193 antibodies from 26 providers"/>
</dbReference>
<dbReference type="DNASU" id="4050"/>
<dbReference type="Ensembl" id="ENST00000376117.3">
    <molecule id="Q06643-1"/>
    <property type="protein sequence ID" value="ENSP00000365285.3"/>
    <property type="gene ID" value="ENSG00000204487.8"/>
</dbReference>
<dbReference type="Ensembl" id="ENST00000383493.2">
    <molecule id="Q06643-1"/>
    <property type="protein sequence ID" value="ENSP00000372985.2"/>
    <property type="gene ID" value="ENSG00000206437.10"/>
</dbReference>
<dbReference type="Ensembl" id="ENST00000420402.2">
    <molecule id="Q06643-1"/>
    <property type="protein sequence ID" value="ENSP00000398741.2"/>
    <property type="gene ID" value="ENSG00000223448.7"/>
</dbReference>
<dbReference type="Ensembl" id="ENST00000421268.2">
    <molecule id="Q06643-1"/>
    <property type="protein sequence ID" value="ENSP00000393693.2"/>
    <property type="gene ID" value="ENSG00000238114.7"/>
</dbReference>
<dbReference type="Ensembl" id="ENST00000429299.3">
    <molecule id="Q06643-1"/>
    <property type="protein sequence ID" value="ENSP00000410481.3"/>
    <property type="gene ID" value="ENSG00000227507.3"/>
</dbReference>
<dbReference type="Ensembl" id="ENST00000444479.2">
    <molecule id="Q06643-1"/>
    <property type="protein sequence ID" value="ENSP00000395102.2"/>
    <property type="gene ID" value="ENSG00000236925.7"/>
</dbReference>
<dbReference type="Ensembl" id="ENST00000446745.2">
    <molecule id="Q06643-2"/>
    <property type="protein sequence ID" value="ENSP00000416113.2"/>
    <property type="gene ID" value="ENSG00000227507.3"/>
</dbReference>
<dbReference type="Ensembl" id="ENST00000456113.2">
    <molecule id="Q06643-1"/>
    <property type="protein sequence ID" value="ENSP00000404014.2"/>
    <property type="gene ID" value="ENSG00000236237.7"/>
</dbReference>
<dbReference type="Ensembl" id="ENST00000457552.2">
    <molecule id="Q06643-1"/>
    <property type="protein sequence ID" value="ENSP00000404450.2"/>
    <property type="gene ID" value="ENSG00000231314.7"/>
</dbReference>
<dbReference type="GeneID" id="4050"/>
<dbReference type="KEGG" id="hsa:4050"/>
<dbReference type="MANE-Select" id="ENST00000429299.3">
    <property type="protein sequence ID" value="ENSP00000410481.3"/>
    <property type="RefSeq nucleotide sequence ID" value="NM_002341.2"/>
    <property type="RefSeq protein sequence ID" value="NP_002332.1"/>
</dbReference>
<dbReference type="UCSC" id="uc003nul.4">
    <molecule id="Q06643-1"/>
    <property type="organism name" value="human"/>
</dbReference>
<dbReference type="AGR" id="HGNC:6711"/>
<dbReference type="CTD" id="4050"/>
<dbReference type="DisGeNET" id="4050"/>
<dbReference type="GeneCards" id="LTB"/>
<dbReference type="HGNC" id="HGNC:6711">
    <property type="gene designation" value="LTB"/>
</dbReference>
<dbReference type="HPA" id="ENSG00000227507">
    <property type="expression patterns" value="Group enriched (intestine, lymphoid tissue)"/>
</dbReference>
<dbReference type="MIM" id="600978">
    <property type="type" value="gene"/>
</dbReference>
<dbReference type="neXtProt" id="NX_Q06643"/>
<dbReference type="OpenTargets" id="ENSG00000227507"/>
<dbReference type="PharmGKB" id="PA30475"/>
<dbReference type="VEuPathDB" id="HostDB:ENSG00000227507"/>
<dbReference type="eggNOG" id="ENOG502SMSQ">
    <property type="taxonomic scope" value="Eukaryota"/>
</dbReference>
<dbReference type="GeneTree" id="ENSGT01130000278318"/>
<dbReference type="HOGENOM" id="CLU_096531_0_0_1"/>
<dbReference type="InParanoid" id="Q06643"/>
<dbReference type="OMA" id="GAWMKGQ"/>
<dbReference type="OrthoDB" id="9933527at2759"/>
<dbReference type="PAN-GO" id="Q06643">
    <property type="GO annotations" value="0 GO annotations based on evolutionary models"/>
</dbReference>
<dbReference type="PhylomeDB" id="Q06643"/>
<dbReference type="TreeFam" id="TF337780"/>
<dbReference type="PathwayCommons" id="Q06643"/>
<dbReference type="Reactome" id="R-HSA-5668541">
    <property type="pathway name" value="TNFR2 non-canonical NF-kB pathway"/>
</dbReference>
<dbReference type="Reactome" id="R-HSA-5676594">
    <property type="pathway name" value="TNF receptor superfamily (TNFSF) members mediating non-canonical NF-kB pathway"/>
</dbReference>
<dbReference type="SignaLink" id="Q06643"/>
<dbReference type="SIGNOR" id="Q06643"/>
<dbReference type="BioGRID-ORCS" id="4050">
    <property type="hits" value="12 hits in 1145 CRISPR screens"/>
</dbReference>
<dbReference type="ChiTaRS" id="LTB">
    <property type="organism name" value="human"/>
</dbReference>
<dbReference type="EvolutionaryTrace" id="Q06643"/>
<dbReference type="GeneWiki" id="Lymphotoxin_beta"/>
<dbReference type="GenomeRNAi" id="4050"/>
<dbReference type="Pharos" id="Q06643">
    <property type="development level" value="Tbio"/>
</dbReference>
<dbReference type="PRO" id="PR:Q06643"/>
<dbReference type="Proteomes" id="UP000005640">
    <property type="component" value="Chromosome 6"/>
</dbReference>
<dbReference type="RNAct" id="Q06643">
    <property type="molecule type" value="protein"/>
</dbReference>
<dbReference type="Bgee" id="ENSG00000227507">
    <property type="expression patterns" value="Expressed in granulocyte and 100 other cell types or tissues"/>
</dbReference>
<dbReference type="ExpressionAtlas" id="Q06643">
    <property type="expression patterns" value="baseline and differential"/>
</dbReference>
<dbReference type="GO" id="GO:0005615">
    <property type="term" value="C:extracellular space"/>
    <property type="evidence" value="ECO:0000318"/>
    <property type="project" value="GO_Central"/>
</dbReference>
<dbReference type="GO" id="GO:0005886">
    <property type="term" value="C:plasma membrane"/>
    <property type="evidence" value="ECO:0000304"/>
    <property type="project" value="Reactome"/>
</dbReference>
<dbReference type="GO" id="GO:0005125">
    <property type="term" value="F:cytokine activity"/>
    <property type="evidence" value="ECO:0000318"/>
    <property type="project" value="GO_Central"/>
</dbReference>
<dbReference type="GO" id="GO:0005102">
    <property type="term" value="F:signaling receptor binding"/>
    <property type="evidence" value="ECO:0000304"/>
    <property type="project" value="ProtInc"/>
</dbReference>
<dbReference type="GO" id="GO:0005164">
    <property type="term" value="F:tumor necrosis factor receptor binding"/>
    <property type="evidence" value="ECO:0007669"/>
    <property type="project" value="InterPro"/>
</dbReference>
<dbReference type="GO" id="GO:0007166">
    <property type="term" value="P:cell surface receptor signaling pathway"/>
    <property type="evidence" value="ECO:0000318"/>
    <property type="project" value="GO_Central"/>
</dbReference>
<dbReference type="GO" id="GO:0007267">
    <property type="term" value="P:cell-cell signaling"/>
    <property type="evidence" value="ECO:0000304"/>
    <property type="project" value="ProtInc"/>
</dbReference>
<dbReference type="GO" id="GO:0010467">
    <property type="term" value="P:gene expression"/>
    <property type="evidence" value="ECO:0007669"/>
    <property type="project" value="Ensembl"/>
</dbReference>
<dbReference type="GO" id="GO:0006955">
    <property type="term" value="P:immune response"/>
    <property type="evidence" value="ECO:0007669"/>
    <property type="project" value="InterPro"/>
</dbReference>
<dbReference type="GO" id="GO:0048535">
    <property type="term" value="P:lymph node development"/>
    <property type="evidence" value="ECO:0007669"/>
    <property type="project" value="Ensembl"/>
</dbReference>
<dbReference type="GO" id="GO:0043123">
    <property type="term" value="P:positive regulation of canonical NF-kappaB signal transduction"/>
    <property type="evidence" value="ECO:0000318"/>
    <property type="project" value="GO_Central"/>
</dbReference>
<dbReference type="GO" id="GO:2001238">
    <property type="term" value="P:positive regulation of extrinsic apoptotic signaling pathway"/>
    <property type="evidence" value="ECO:0000318"/>
    <property type="project" value="GO_Central"/>
</dbReference>
<dbReference type="GO" id="GO:0032735">
    <property type="term" value="P:positive regulation of interleukin-12 production"/>
    <property type="evidence" value="ECO:0000250"/>
    <property type="project" value="UniProtKB"/>
</dbReference>
<dbReference type="GO" id="GO:0007165">
    <property type="term" value="P:signal transduction"/>
    <property type="evidence" value="ECO:0000304"/>
    <property type="project" value="ProtInc"/>
</dbReference>
<dbReference type="GO" id="GO:0043588">
    <property type="term" value="P:skin development"/>
    <property type="evidence" value="ECO:0007669"/>
    <property type="project" value="Ensembl"/>
</dbReference>
<dbReference type="CDD" id="cd00184">
    <property type="entry name" value="TNF"/>
    <property type="match status" value="1"/>
</dbReference>
<dbReference type="FunFam" id="2.60.120.40:FF:000030">
    <property type="entry name" value="Lymphotoxin-beta"/>
    <property type="match status" value="1"/>
</dbReference>
<dbReference type="Gene3D" id="2.60.120.40">
    <property type="match status" value="1"/>
</dbReference>
<dbReference type="InterPro" id="IPR006053">
    <property type="entry name" value="TNF"/>
</dbReference>
<dbReference type="InterPro" id="IPR002961">
    <property type="entry name" value="TNF_C"/>
</dbReference>
<dbReference type="InterPro" id="IPR021184">
    <property type="entry name" value="TNF_CS"/>
</dbReference>
<dbReference type="InterPro" id="IPR006052">
    <property type="entry name" value="TNF_dom"/>
</dbReference>
<dbReference type="InterPro" id="IPR008983">
    <property type="entry name" value="Tumour_necrosis_fac-like_dom"/>
</dbReference>
<dbReference type="PANTHER" id="PTHR11471:SF29">
    <property type="entry name" value="LYMPHOTOXIN-BETA"/>
    <property type="match status" value="1"/>
</dbReference>
<dbReference type="PANTHER" id="PTHR11471">
    <property type="entry name" value="TUMOR NECROSIS FACTOR FAMILY MEMBER"/>
    <property type="match status" value="1"/>
</dbReference>
<dbReference type="Pfam" id="PF00229">
    <property type="entry name" value="TNF"/>
    <property type="match status" value="1"/>
</dbReference>
<dbReference type="PRINTS" id="PR01234">
    <property type="entry name" value="TNECROSISFCT"/>
</dbReference>
<dbReference type="PRINTS" id="PR01237">
    <property type="entry name" value="TNFC"/>
</dbReference>
<dbReference type="SMART" id="SM00207">
    <property type="entry name" value="TNF"/>
    <property type="match status" value="1"/>
</dbReference>
<dbReference type="SUPFAM" id="SSF49842">
    <property type="entry name" value="TNF-like"/>
    <property type="match status" value="1"/>
</dbReference>
<dbReference type="PROSITE" id="PS00251">
    <property type="entry name" value="THD_1"/>
    <property type="match status" value="1"/>
</dbReference>
<dbReference type="PROSITE" id="PS50049">
    <property type="entry name" value="THD_2"/>
    <property type="match status" value="1"/>
</dbReference>